<proteinExistence type="inferred from homology"/>
<gene>
    <name evidence="1" type="primary">lpxK</name>
    <name type="ordered locus">BQ02550</name>
</gene>
<accession>Q6G0J6</accession>
<comment type="function">
    <text evidence="1">Transfers the gamma-phosphate of ATP to the 4'-position of a tetraacyldisaccharide 1-phosphate intermediate (termed DS-1-P) to form tetraacyldisaccharide 1,4'-bis-phosphate (lipid IVA).</text>
</comment>
<comment type="catalytic activity">
    <reaction evidence="1">
        <text>a lipid A disaccharide + ATP = a lipid IVA + ADP + H(+)</text>
        <dbReference type="Rhea" id="RHEA:67840"/>
        <dbReference type="ChEBI" id="CHEBI:15378"/>
        <dbReference type="ChEBI" id="CHEBI:30616"/>
        <dbReference type="ChEBI" id="CHEBI:176343"/>
        <dbReference type="ChEBI" id="CHEBI:176425"/>
        <dbReference type="ChEBI" id="CHEBI:456216"/>
        <dbReference type="EC" id="2.7.1.130"/>
    </reaction>
</comment>
<comment type="pathway">
    <text evidence="1">Glycolipid biosynthesis; lipid IV(A) biosynthesis; lipid IV(A) from (3R)-3-hydroxytetradecanoyl-[acyl-carrier-protein] and UDP-N-acetyl-alpha-D-glucosamine: step 6/6.</text>
</comment>
<comment type="similarity">
    <text evidence="1">Belongs to the LpxK family.</text>
</comment>
<keyword id="KW-0067">ATP-binding</keyword>
<keyword id="KW-0418">Kinase</keyword>
<keyword id="KW-0441">Lipid A biosynthesis</keyword>
<keyword id="KW-0444">Lipid biosynthesis</keyword>
<keyword id="KW-0443">Lipid metabolism</keyword>
<keyword id="KW-0547">Nucleotide-binding</keyword>
<keyword id="KW-0808">Transferase</keyword>
<dbReference type="EC" id="2.7.1.130" evidence="1"/>
<dbReference type="EMBL" id="BX897700">
    <property type="protein sequence ID" value="CAF25758.1"/>
    <property type="molecule type" value="Genomic_DNA"/>
</dbReference>
<dbReference type="RefSeq" id="WP_011179067.1">
    <property type="nucleotide sequence ID" value="NC_005955.1"/>
</dbReference>
<dbReference type="SMR" id="Q6G0J6"/>
<dbReference type="KEGG" id="bqu:BQ02550"/>
<dbReference type="eggNOG" id="COG1663">
    <property type="taxonomic scope" value="Bacteria"/>
</dbReference>
<dbReference type="HOGENOM" id="CLU_038816_0_0_5"/>
<dbReference type="OrthoDB" id="9766423at2"/>
<dbReference type="UniPathway" id="UPA00359">
    <property type="reaction ID" value="UER00482"/>
</dbReference>
<dbReference type="Proteomes" id="UP000000597">
    <property type="component" value="Chromosome"/>
</dbReference>
<dbReference type="GO" id="GO:0005886">
    <property type="term" value="C:plasma membrane"/>
    <property type="evidence" value="ECO:0007669"/>
    <property type="project" value="TreeGrafter"/>
</dbReference>
<dbReference type="GO" id="GO:0005524">
    <property type="term" value="F:ATP binding"/>
    <property type="evidence" value="ECO:0007669"/>
    <property type="project" value="UniProtKB-UniRule"/>
</dbReference>
<dbReference type="GO" id="GO:0009029">
    <property type="term" value="F:tetraacyldisaccharide 4'-kinase activity"/>
    <property type="evidence" value="ECO:0007669"/>
    <property type="project" value="UniProtKB-UniRule"/>
</dbReference>
<dbReference type="GO" id="GO:0009245">
    <property type="term" value="P:lipid A biosynthetic process"/>
    <property type="evidence" value="ECO:0007669"/>
    <property type="project" value="UniProtKB-UniRule"/>
</dbReference>
<dbReference type="GO" id="GO:0009244">
    <property type="term" value="P:lipopolysaccharide core region biosynthetic process"/>
    <property type="evidence" value="ECO:0007669"/>
    <property type="project" value="TreeGrafter"/>
</dbReference>
<dbReference type="HAMAP" id="MF_00409">
    <property type="entry name" value="LpxK"/>
    <property type="match status" value="1"/>
</dbReference>
<dbReference type="InterPro" id="IPR003758">
    <property type="entry name" value="LpxK"/>
</dbReference>
<dbReference type="InterPro" id="IPR027417">
    <property type="entry name" value="P-loop_NTPase"/>
</dbReference>
<dbReference type="NCBIfam" id="TIGR00682">
    <property type="entry name" value="lpxK"/>
    <property type="match status" value="1"/>
</dbReference>
<dbReference type="PANTHER" id="PTHR42724">
    <property type="entry name" value="TETRAACYLDISACCHARIDE 4'-KINASE"/>
    <property type="match status" value="1"/>
</dbReference>
<dbReference type="PANTHER" id="PTHR42724:SF1">
    <property type="entry name" value="TETRAACYLDISACCHARIDE 4'-KINASE, MITOCHONDRIAL-RELATED"/>
    <property type="match status" value="1"/>
</dbReference>
<dbReference type="Pfam" id="PF02606">
    <property type="entry name" value="LpxK"/>
    <property type="match status" value="1"/>
</dbReference>
<dbReference type="SUPFAM" id="SSF52540">
    <property type="entry name" value="P-loop containing nucleoside triphosphate hydrolases"/>
    <property type="match status" value="1"/>
</dbReference>
<reference key="1">
    <citation type="journal article" date="2004" name="Proc. Natl. Acad. Sci. U.S.A.">
        <title>The louse-borne human pathogen Bartonella quintana is a genomic derivative of the zoonotic agent Bartonella henselae.</title>
        <authorList>
            <person name="Alsmark U.C.M."/>
            <person name="Frank A.C."/>
            <person name="Karlberg E.O."/>
            <person name="Legault B.-A."/>
            <person name="Ardell D.H."/>
            <person name="Canbaeck B."/>
            <person name="Eriksson A.-S."/>
            <person name="Naeslund A.K."/>
            <person name="Handley S.A."/>
            <person name="Huvet M."/>
            <person name="La Scola B."/>
            <person name="Holmberg M."/>
            <person name="Andersson S.G.E."/>
        </authorList>
    </citation>
    <scope>NUCLEOTIDE SEQUENCE [LARGE SCALE GENOMIC DNA]</scope>
    <source>
        <strain>Toulouse</strain>
    </source>
</reference>
<feature type="chain" id="PRO_0000190909" description="Tetraacyldisaccharide 4'-kinase">
    <location>
        <begin position="1"/>
        <end position="343"/>
    </location>
</feature>
<feature type="binding site" evidence="1">
    <location>
        <begin position="53"/>
        <end position="60"/>
    </location>
    <ligand>
        <name>ATP</name>
        <dbReference type="ChEBI" id="CHEBI:30616"/>
    </ligand>
</feature>
<name>LPXK_BARQU</name>
<protein>
    <recommendedName>
        <fullName evidence="1">Tetraacyldisaccharide 4'-kinase</fullName>
        <ecNumber evidence="1">2.7.1.130</ecNumber>
    </recommendedName>
    <alternativeName>
        <fullName evidence="1">Lipid A 4'-kinase</fullName>
    </alternativeName>
</protein>
<sequence>MLISTPHFWWKDKSFLRFLLTPVSWGYGYFSHRCMVRELPVIDLPVLCIGNFTCGGAGKTPVVIAFAKVAKELGFLPGVVSRGYGGAVKGVHLINEQFDNARDVGDEALLLARHAFVAISSNRYVAAQRLKEEGCNLILMDDGFQSRRLYMDYALLVVDAMRGFGNGAVFPAGPLRAPLKTQFSLMDSVLLIGHSDACENVVFLVTRTGKALHHAHLKSLASDEVMGKSFLAFAGIGNPNKFFKSIKELSGRVVQTYSYPDHYFFTDTDLKNLIQQAKMNNLWLATTAKDYTRIQTSHVQKDLKNLIVFDVEVDFVQEDFCRMILEEVMSRFRERKTLFNLHF</sequence>
<organism>
    <name type="scientific">Bartonella quintana (strain Toulouse)</name>
    <name type="common">Rochalimaea quintana</name>
    <dbReference type="NCBI Taxonomy" id="283165"/>
    <lineage>
        <taxon>Bacteria</taxon>
        <taxon>Pseudomonadati</taxon>
        <taxon>Pseudomonadota</taxon>
        <taxon>Alphaproteobacteria</taxon>
        <taxon>Hyphomicrobiales</taxon>
        <taxon>Bartonellaceae</taxon>
        <taxon>Bartonella</taxon>
    </lineage>
</organism>
<evidence type="ECO:0000255" key="1">
    <source>
        <dbReference type="HAMAP-Rule" id="MF_00409"/>
    </source>
</evidence>